<proteinExistence type="inferred from homology"/>
<reference key="1">
    <citation type="journal article" date="2004" name="Nucleic Acids Res.">
        <title>Unique features revealed by the genome sequence of Acinetobacter sp. ADP1, a versatile and naturally transformation competent bacterium.</title>
        <authorList>
            <person name="Barbe V."/>
            <person name="Vallenet D."/>
            <person name="Fonknechten N."/>
            <person name="Kreimeyer A."/>
            <person name="Oztas S."/>
            <person name="Labarre L."/>
            <person name="Cruveiller S."/>
            <person name="Robert C."/>
            <person name="Duprat S."/>
            <person name="Wincker P."/>
            <person name="Ornston L.N."/>
            <person name="Weissenbach J."/>
            <person name="Marliere P."/>
            <person name="Cohen G.N."/>
            <person name="Medigue C."/>
        </authorList>
    </citation>
    <scope>NUCLEOTIDE SEQUENCE [LARGE SCALE GENOMIC DNA]</scope>
    <source>
        <strain>ATCC 33305 / BD413 / ADP1</strain>
    </source>
</reference>
<dbReference type="EMBL" id="CR543861">
    <property type="protein sequence ID" value="CAG69888.1"/>
    <property type="molecule type" value="Genomic_DNA"/>
</dbReference>
<dbReference type="RefSeq" id="WP_004924134.1">
    <property type="nucleotide sequence ID" value="NC_005966.1"/>
</dbReference>
<dbReference type="SMR" id="Q6F7S7"/>
<dbReference type="STRING" id="202950.GCA_001485005_02951"/>
<dbReference type="GeneID" id="45235419"/>
<dbReference type="KEGG" id="aci:ACIAD3204"/>
<dbReference type="eggNOG" id="COG0097">
    <property type="taxonomic scope" value="Bacteria"/>
</dbReference>
<dbReference type="HOGENOM" id="CLU_065464_1_2_6"/>
<dbReference type="OrthoDB" id="9805007at2"/>
<dbReference type="BioCyc" id="ASP62977:ACIAD_RS14520-MONOMER"/>
<dbReference type="Proteomes" id="UP000000430">
    <property type="component" value="Chromosome"/>
</dbReference>
<dbReference type="GO" id="GO:0022625">
    <property type="term" value="C:cytosolic large ribosomal subunit"/>
    <property type="evidence" value="ECO:0007669"/>
    <property type="project" value="TreeGrafter"/>
</dbReference>
<dbReference type="GO" id="GO:0019843">
    <property type="term" value="F:rRNA binding"/>
    <property type="evidence" value="ECO:0007669"/>
    <property type="project" value="UniProtKB-UniRule"/>
</dbReference>
<dbReference type="GO" id="GO:0003735">
    <property type="term" value="F:structural constituent of ribosome"/>
    <property type="evidence" value="ECO:0007669"/>
    <property type="project" value="InterPro"/>
</dbReference>
<dbReference type="GO" id="GO:0002181">
    <property type="term" value="P:cytoplasmic translation"/>
    <property type="evidence" value="ECO:0007669"/>
    <property type="project" value="TreeGrafter"/>
</dbReference>
<dbReference type="FunFam" id="3.90.930.12:FF:000001">
    <property type="entry name" value="50S ribosomal protein L6"/>
    <property type="match status" value="1"/>
</dbReference>
<dbReference type="FunFam" id="3.90.930.12:FF:000002">
    <property type="entry name" value="50S ribosomal protein L6"/>
    <property type="match status" value="1"/>
</dbReference>
<dbReference type="Gene3D" id="3.90.930.12">
    <property type="entry name" value="Ribosomal protein L6, alpha-beta domain"/>
    <property type="match status" value="2"/>
</dbReference>
<dbReference type="HAMAP" id="MF_01365_B">
    <property type="entry name" value="Ribosomal_uL6_B"/>
    <property type="match status" value="1"/>
</dbReference>
<dbReference type="InterPro" id="IPR000702">
    <property type="entry name" value="Ribosomal_uL6-like"/>
</dbReference>
<dbReference type="InterPro" id="IPR036789">
    <property type="entry name" value="Ribosomal_uL6-like_a/b-dom_sf"/>
</dbReference>
<dbReference type="InterPro" id="IPR020040">
    <property type="entry name" value="Ribosomal_uL6_a/b-dom"/>
</dbReference>
<dbReference type="InterPro" id="IPR019906">
    <property type="entry name" value="Ribosomal_uL6_bac-type"/>
</dbReference>
<dbReference type="InterPro" id="IPR002358">
    <property type="entry name" value="Ribosomal_uL6_CS"/>
</dbReference>
<dbReference type="NCBIfam" id="TIGR03654">
    <property type="entry name" value="L6_bact"/>
    <property type="match status" value="1"/>
</dbReference>
<dbReference type="PANTHER" id="PTHR11655">
    <property type="entry name" value="60S/50S RIBOSOMAL PROTEIN L6/L9"/>
    <property type="match status" value="1"/>
</dbReference>
<dbReference type="PANTHER" id="PTHR11655:SF14">
    <property type="entry name" value="LARGE RIBOSOMAL SUBUNIT PROTEIN UL6M"/>
    <property type="match status" value="1"/>
</dbReference>
<dbReference type="Pfam" id="PF00347">
    <property type="entry name" value="Ribosomal_L6"/>
    <property type="match status" value="2"/>
</dbReference>
<dbReference type="PIRSF" id="PIRSF002162">
    <property type="entry name" value="Ribosomal_L6"/>
    <property type="match status" value="1"/>
</dbReference>
<dbReference type="PRINTS" id="PR00059">
    <property type="entry name" value="RIBOSOMALL6"/>
</dbReference>
<dbReference type="SUPFAM" id="SSF56053">
    <property type="entry name" value="Ribosomal protein L6"/>
    <property type="match status" value="2"/>
</dbReference>
<dbReference type="PROSITE" id="PS00525">
    <property type="entry name" value="RIBOSOMAL_L6_1"/>
    <property type="match status" value="1"/>
</dbReference>
<gene>
    <name evidence="1" type="primary">rplF</name>
    <name type="ordered locus">ACIAD3204</name>
</gene>
<evidence type="ECO:0000255" key="1">
    <source>
        <dbReference type="HAMAP-Rule" id="MF_01365"/>
    </source>
</evidence>
<evidence type="ECO:0000305" key="2"/>
<sequence>MSRVAKAPVTVPNGVAVTQNGRQVEVKGTKGTLSFNLHALVELKQEEGKLQLAPVKESKDAWMQAGTARAVLNNLVKGVSEGFERKLQLIGVGYKAAVKGTSINLNLGFSHPIDYSLPEGVTAETPTATEIILKSADKQLLGQVASEIRGYRPPEPYKGKGVRYSDEVVLRKEAKKK</sequence>
<organism>
    <name type="scientific">Acinetobacter baylyi (strain ATCC 33305 / BD413 / ADP1)</name>
    <dbReference type="NCBI Taxonomy" id="62977"/>
    <lineage>
        <taxon>Bacteria</taxon>
        <taxon>Pseudomonadati</taxon>
        <taxon>Pseudomonadota</taxon>
        <taxon>Gammaproteobacteria</taxon>
        <taxon>Moraxellales</taxon>
        <taxon>Moraxellaceae</taxon>
        <taxon>Acinetobacter</taxon>
    </lineage>
</organism>
<name>RL6_ACIAD</name>
<keyword id="KW-0687">Ribonucleoprotein</keyword>
<keyword id="KW-0689">Ribosomal protein</keyword>
<keyword id="KW-0694">RNA-binding</keyword>
<keyword id="KW-0699">rRNA-binding</keyword>
<comment type="function">
    <text evidence="1">This protein binds to the 23S rRNA, and is important in its secondary structure. It is located near the subunit interface in the base of the L7/L12 stalk, and near the tRNA binding site of the peptidyltransferase center.</text>
</comment>
<comment type="subunit">
    <text evidence="1">Part of the 50S ribosomal subunit.</text>
</comment>
<comment type="similarity">
    <text evidence="1">Belongs to the universal ribosomal protein uL6 family.</text>
</comment>
<feature type="chain" id="PRO_0000265208" description="Large ribosomal subunit protein uL6">
    <location>
        <begin position="1"/>
        <end position="177"/>
    </location>
</feature>
<accession>Q6F7S7</accession>
<protein>
    <recommendedName>
        <fullName evidence="1">Large ribosomal subunit protein uL6</fullName>
    </recommendedName>
    <alternativeName>
        <fullName evidence="2">50S ribosomal protein L6</fullName>
    </alternativeName>
</protein>